<proteinExistence type="inferred from homology"/>
<evidence type="ECO:0000255" key="1">
    <source>
        <dbReference type="HAMAP-Rule" id="MF_00332"/>
    </source>
</evidence>
<evidence type="ECO:0000256" key="2">
    <source>
        <dbReference type="SAM" id="MobiDB-lite"/>
    </source>
</evidence>
<reference key="1">
    <citation type="journal article" date="2003" name="J. Bacteriol.">
        <title>Comparative analyses of the complete genome sequences of Pierce's disease and citrus variegated chlorosis strains of Xylella fastidiosa.</title>
        <authorList>
            <person name="Van Sluys M.A."/>
            <person name="de Oliveira M.C."/>
            <person name="Monteiro-Vitorello C.B."/>
            <person name="Miyaki C.Y."/>
            <person name="Furlan L.R."/>
            <person name="Camargo L.E.A."/>
            <person name="da Silva A.C.R."/>
            <person name="Moon D.H."/>
            <person name="Takita M.A."/>
            <person name="Lemos E.G.M."/>
            <person name="Machado M.A."/>
            <person name="Ferro M.I.T."/>
            <person name="da Silva F.R."/>
            <person name="Goldman M.H.S."/>
            <person name="Goldman G.H."/>
            <person name="Lemos M.V.F."/>
            <person name="El-Dorry H."/>
            <person name="Tsai S.M."/>
            <person name="Carrer H."/>
            <person name="Carraro D.M."/>
            <person name="de Oliveira R.C."/>
            <person name="Nunes L.R."/>
            <person name="Siqueira W.J."/>
            <person name="Coutinho L.L."/>
            <person name="Kimura E.T."/>
            <person name="Ferro E.S."/>
            <person name="Harakava R."/>
            <person name="Kuramae E.E."/>
            <person name="Marino C.L."/>
            <person name="Giglioti E."/>
            <person name="Abreu I.L."/>
            <person name="Alves L.M.C."/>
            <person name="do Amaral A.M."/>
            <person name="Baia G.S."/>
            <person name="Blanco S.R."/>
            <person name="Brito M.S."/>
            <person name="Cannavan F.S."/>
            <person name="Celestino A.V."/>
            <person name="da Cunha A.F."/>
            <person name="Fenille R.C."/>
            <person name="Ferro J.A."/>
            <person name="Formighieri E.F."/>
            <person name="Kishi L.T."/>
            <person name="Leoni S.G."/>
            <person name="Oliveira A.R."/>
            <person name="Rosa V.E. Jr."/>
            <person name="Sassaki F.T."/>
            <person name="Sena J.A.D."/>
            <person name="de Souza A.A."/>
            <person name="Truffi D."/>
            <person name="Tsukumo F."/>
            <person name="Yanai G.M."/>
            <person name="Zaros L.G."/>
            <person name="Civerolo E.L."/>
            <person name="Simpson A.J.G."/>
            <person name="Almeida N.F. Jr."/>
            <person name="Setubal J.C."/>
            <person name="Kitajima J.P."/>
        </authorList>
    </citation>
    <scope>NUCLEOTIDE SEQUENCE [LARGE SCALE GENOMIC DNA]</scope>
    <source>
        <strain>Temecula1 / ATCC 700964</strain>
    </source>
</reference>
<gene>
    <name evidence="1" type="primary">dnaK</name>
    <name type="ordered locus">PD_1370</name>
</gene>
<comment type="function">
    <text evidence="1">Acts as a chaperone.</text>
</comment>
<comment type="induction">
    <text evidence="1">By stress conditions e.g. heat shock.</text>
</comment>
<comment type="similarity">
    <text evidence="1">Belongs to the heat shock protein 70 family.</text>
</comment>
<feature type="chain" id="PRO_0000078592" description="Chaperone protein DnaK">
    <location>
        <begin position="1"/>
        <end position="638"/>
    </location>
</feature>
<feature type="region of interest" description="Disordered" evidence="2">
    <location>
        <begin position="598"/>
        <end position="621"/>
    </location>
</feature>
<feature type="modified residue" description="Phosphothreonine; by autocatalysis" evidence="1">
    <location>
        <position position="200"/>
    </location>
</feature>
<dbReference type="EMBL" id="AE009442">
    <property type="protein sequence ID" value="AAO29217.1"/>
    <property type="molecule type" value="Genomic_DNA"/>
</dbReference>
<dbReference type="RefSeq" id="WP_004091050.1">
    <property type="nucleotide sequence ID" value="NC_004556.1"/>
</dbReference>
<dbReference type="SMR" id="Q87BS8"/>
<dbReference type="GeneID" id="93905187"/>
<dbReference type="KEGG" id="xft:PD_1370"/>
<dbReference type="HOGENOM" id="CLU_005965_2_1_6"/>
<dbReference type="Proteomes" id="UP000002516">
    <property type="component" value="Chromosome"/>
</dbReference>
<dbReference type="GO" id="GO:0005524">
    <property type="term" value="F:ATP binding"/>
    <property type="evidence" value="ECO:0007669"/>
    <property type="project" value="UniProtKB-UniRule"/>
</dbReference>
<dbReference type="GO" id="GO:0140662">
    <property type="term" value="F:ATP-dependent protein folding chaperone"/>
    <property type="evidence" value="ECO:0007669"/>
    <property type="project" value="InterPro"/>
</dbReference>
<dbReference type="GO" id="GO:0051082">
    <property type="term" value="F:unfolded protein binding"/>
    <property type="evidence" value="ECO:0007669"/>
    <property type="project" value="InterPro"/>
</dbReference>
<dbReference type="CDD" id="cd10234">
    <property type="entry name" value="ASKHA_NBD_HSP70_DnaK-like"/>
    <property type="match status" value="1"/>
</dbReference>
<dbReference type="FunFam" id="2.60.34.10:FF:000014">
    <property type="entry name" value="Chaperone protein DnaK HSP70"/>
    <property type="match status" value="1"/>
</dbReference>
<dbReference type="FunFam" id="3.30.30.30:FF:000003">
    <property type="entry name" value="Heat shock protein 9"/>
    <property type="match status" value="1"/>
</dbReference>
<dbReference type="FunFam" id="1.20.1270.10:FF:000001">
    <property type="entry name" value="Molecular chaperone DnaK"/>
    <property type="match status" value="1"/>
</dbReference>
<dbReference type="FunFam" id="3.30.420.40:FF:000004">
    <property type="entry name" value="Molecular chaperone DnaK"/>
    <property type="match status" value="1"/>
</dbReference>
<dbReference type="FunFam" id="3.90.640.10:FF:000003">
    <property type="entry name" value="Molecular chaperone DnaK"/>
    <property type="match status" value="1"/>
</dbReference>
<dbReference type="Gene3D" id="1.20.1270.10">
    <property type="match status" value="1"/>
</dbReference>
<dbReference type="Gene3D" id="3.30.420.40">
    <property type="match status" value="2"/>
</dbReference>
<dbReference type="Gene3D" id="3.90.640.10">
    <property type="entry name" value="Actin, Chain A, domain 4"/>
    <property type="match status" value="1"/>
</dbReference>
<dbReference type="Gene3D" id="2.60.34.10">
    <property type="entry name" value="Substrate Binding Domain Of DNAk, Chain A, domain 1"/>
    <property type="match status" value="1"/>
</dbReference>
<dbReference type="HAMAP" id="MF_00332">
    <property type="entry name" value="DnaK"/>
    <property type="match status" value="1"/>
</dbReference>
<dbReference type="InterPro" id="IPR043129">
    <property type="entry name" value="ATPase_NBD"/>
</dbReference>
<dbReference type="InterPro" id="IPR012725">
    <property type="entry name" value="Chaperone_DnaK"/>
</dbReference>
<dbReference type="InterPro" id="IPR018181">
    <property type="entry name" value="Heat_shock_70_CS"/>
</dbReference>
<dbReference type="InterPro" id="IPR029048">
    <property type="entry name" value="HSP70_C_sf"/>
</dbReference>
<dbReference type="InterPro" id="IPR029047">
    <property type="entry name" value="HSP70_peptide-bd_sf"/>
</dbReference>
<dbReference type="InterPro" id="IPR013126">
    <property type="entry name" value="Hsp_70_fam"/>
</dbReference>
<dbReference type="NCBIfam" id="NF001413">
    <property type="entry name" value="PRK00290.1"/>
    <property type="match status" value="1"/>
</dbReference>
<dbReference type="NCBIfam" id="NF003520">
    <property type="entry name" value="PRK05183.1"/>
    <property type="match status" value="1"/>
</dbReference>
<dbReference type="NCBIfam" id="TIGR02350">
    <property type="entry name" value="prok_dnaK"/>
    <property type="match status" value="1"/>
</dbReference>
<dbReference type="PANTHER" id="PTHR19375">
    <property type="entry name" value="HEAT SHOCK PROTEIN 70KDA"/>
    <property type="match status" value="1"/>
</dbReference>
<dbReference type="Pfam" id="PF00012">
    <property type="entry name" value="HSP70"/>
    <property type="match status" value="1"/>
</dbReference>
<dbReference type="PRINTS" id="PR00301">
    <property type="entry name" value="HEATSHOCK70"/>
</dbReference>
<dbReference type="SUPFAM" id="SSF53067">
    <property type="entry name" value="Actin-like ATPase domain"/>
    <property type="match status" value="2"/>
</dbReference>
<dbReference type="SUPFAM" id="SSF100920">
    <property type="entry name" value="Heat shock protein 70kD (HSP70), peptide-binding domain"/>
    <property type="match status" value="1"/>
</dbReference>
<dbReference type="PROSITE" id="PS00297">
    <property type="entry name" value="HSP70_1"/>
    <property type="match status" value="1"/>
</dbReference>
<dbReference type="PROSITE" id="PS00329">
    <property type="entry name" value="HSP70_2"/>
    <property type="match status" value="1"/>
</dbReference>
<dbReference type="PROSITE" id="PS01036">
    <property type="entry name" value="HSP70_3"/>
    <property type="match status" value="1"/>
</dbReference>
<name>DNAK_XYLFT</name>
<accession>Q87BS8</accession>
<keyword id="KW-0067">ATP-binding</keyword>
<keyword id="KW-0143">Chaperone</keyword>
<keyword id="KW-0547">Nucleotide-binding</keyword>
<keyword id="KW-0597">Phosphoprotein</keyword>
<keyword id="KW-1185">Reference proteome</keyword>
<keyword id="KW-0346">Stress response</keyword>
<sequence>MGKIIGIDLGTTNSCLAIIEGGKGRVIENSEGDRTTPSIVAYTKDGEVLVGAAAKRQAVTNPKNTFYAVKRLIGRKFGDAEVQKDLDLVPYKITQHDNGDAWVATADGKKLAPQEISAKVLEKMKKTAEDFLGEKVTEAVITVPAYFNDSQRQATKDAGRIAGLDVKRIINEPTAAALAYGLDKKGGDRKIAVYDLGGGTFDVSIIEIAEVDGEKQFEVLATNGDTFLGGEDFDKRVIDYLVDEFNKDQGIDLRKDPLALQRLKDAAERAKIELSSSQQTEVNLPYITADASGPKHLNIKLTRAKLEALVDDLVRKSIEPCRIALNDAGLRTSDVQEVILVGGQTRMPKVQQAVADFFGKEPRKDVNPDEAVALGAAIQGGVLAGDVKDVLLLDVTPLSLGIETMGGVFTKIIEKNTTIPTKASQVFSTAEDGQSAVTVHVLQGEREQARFNKSLAKFDLAGIEPAPRGQPQIEVSFDIDANGILHVSAKDKKTNKEQKVEVKAGSGLSDSEIQQMVADAEAHREEDKKFQELVQARNHADGLIHSTRSAIKEHGSKVGGELIGRVEASLAELEAAVKGDDKNQIEAKSKTLEEVAQSLHMAATAEQQSGSTGAGAGASAKVDDVVDAEFTEVKADKK</sequence>
<organism>
    <name type="scientific">Xylella fastidiosa (strain Temecula1 / ATCC 700964)</name>
    <dbReference type="NCBI Taxonomy" id="183190"/>
    <lineage>
        <taxon>Bacteria</taxon>
        <taxon>Pseudomonadati</taxon>
        <taxon>Pseudomonadota</taxon>
        <taxon>Gammaproteobacteria</taxon>
        <taxon>Lysobacterales</taxon>
        <taxon>Lysobacteraceae</taxon>
        <taxon>Xylella</taxon>
    </lineage>
</organism>
<protein>
    <recommendedName>
        <fullName evidence="1">Chaperone protein DnaK</fullName>
    </recommendedName>
    <alternativeName>
        <fullName evidence="1">HSP70</fullName>
    </alternativeName>
    <alternativeName>
        <fullName evidence="1">Heat shock 70 kDa protein</fullName>
    </alternativeName>
    <alternativeName>
        <fullName evidence="1">Heat shock protein 70</fullName>
    </alternativeName>
</protein>